<dbReference type="EMBL" id="AF310896">
    <property type="protein sequence ID" value="AAG45140.1"/>
    <property type="molecule type" value="Genomic_DNA"/>
</dbReference>
<dbReference type="EMBL" id="AAFI02000194">
    <property type="protein sequence ID" value="EAL61082.1"/>
    <property type="molecule type" value="Genomic_DNA"/>
</dbReference>
<dbReference type="RefSeq" id="XP_629539.1">
    <property type="nucleotide sequence ID" value="XM_629537.1"/>
</dbReference>
<dbReference type="SMR" id="Q9GPR0"/>
<dbReference type="FunCoup" id="Q9GPR0">
    <property type="interactions" value="1"/>
</dbReference>
<dbReference type="STRING" id="44689.Q9GPR0"/>
<dbReference type="PaxDb" id="44689-DDB0185175"/>
<dbReference type="EnsemblProtists" id="EAL61082">
    <property type="protein sequence ID" value="EAL61082"/>
    <property type="gene ID" value="DDB_G0292558"/>
</dbReference>
<dbReference type="GeneID" id="8628797"/>
<dbReference type="KEGG" id="ddi:DDB_G0292558"/>
<dbReference type="dictyBase" id="DDB_G0292558">
    <property type="gene designation" value="fam96A"/>
</dbReference>
<dbReference type="VEuPathDB" id="AmoebaDB:DDB_G0292558"/>
<dbReference type="eggNOG" id="KOG3381">
    <property type="taxonomic scope" value="Eukaryota"/>
</dbReference>
<dbReference type="HOGENOM" id="CLU_075876_4_2_1"/>
<dbReference type="InParanoid" id="Q9GPR0"/>
<dbReference type="OMA" id="HELGYRN"/>
<dbReference type="PhylomeDB" id="Q9GPR0"/>
<dbReference type="PRO" id="PR:Q9GPR0"/>
<dbReference type="Proteomes" id="UP000002195">
    <property type="component" value="Chromosome 6"/>
</dbReference>
<dbReference type="GO" id="GO:0007059">
    <property type="term" value="P:chromosome segregation"/>
    <property type="evidence" value="ECO:0007669"/>
    <property type="project" value="UniProtKB-KW"/>
</dbReference>
<dbReference type="GO" id="GO:0051604">
    <property type="term" value="P:protein maturation"/>
    <property type="evidence" value="ECO:0007669"/>
    <property type="project" value="InterPro"/>
</dbReference>
<dbReference type="Gene3D" id="6.10.250.1280">
    <property type="match status" value="1"/>
</dbReference>
<dbReference type="Gene3D" id="3.30.300.130">
    <property type="entry name" value="Fe-S cluster assembly (FSCA)"/>
    <property type="match status" value="1"/>
</dbReference>
<dbReference type="InterPro" id="IPR034904">
    <property type="entry name" value="FSCA_dom_sf"/>
</dbReference>
<dbReference type="InterPro" id="IPR039796">
    <property type="entry name" value="MIP18"/>
</dbReference>
<dbReference type="PANTHER" id="PTHR12377:SF2">
    <property type="entry name" value="CYTOSOLIC IRON-SULFUR ASSEMBLY COMPONENT 2A"/>
    <property type="match status" value="1"/>
</dbReference>
<dbReference type="PANTHER" id="PTHR12377">
    <property type="entry name" value="CYTOSOLIC IRON-SULFUR ASSEMBLY COMPONENT 2B-RELATED"/>
    <property type="match status" value="1"/>
</dbReference>
<dbReference type="SUPFAM" id="SSF117916">
    <property type="entry name" value="Fe-S cluster assembly (FSCA) domain-like"/>
    <property type="match status" value="1"/>
</dbReference>
<proteinExistence type="inferred from homology"/>
<organism>
    <name type="scientific">Dictyostelium discoideum</name>
    <name type="common">Social amoeba</name>
    <dbReference type="NCBI Taxonomy" id="44689"/>
    <lineage>
        <taxon>Eukaryota</taxon>
        <taxon>Amoebozoa</taxon>
        <taxon>Evosea</taxon>
        <taxon>Eumycetozoa</taxon>
        <taxon>Dictyostelia</taxon>
        <taxon>Dictyosteliales</taxon>
        <taxon>Dictyosteliaceae</taxon>
        <taxon>Dictyostelium</taxon>
    </lineage>
</organism>
<sequence length="150" mass="17763">MIMNYNVIDKIDVFDIIRHIKDPEFPKTLEELKVVNEDWITVIDNNDINDSDDINNNNNENYKGYCFIKILFQPTVPHCHLAPTIALCIREKIKEYLPKRSKIEIYIKKGTHQTEDEINKQINDKERIIAALENPEIFQLVKKCIKEDDY</sequence>
<gene>
    <name type="primary">fam96A</name>
    <name type="ORF">DDB_G0292558</name>
</gene>
<accession>Q9GPR0</accession>
<accession>Q54CY1</accession>
<comment type="function">
    <text evidence="1">May play a role in chromosome segregation through establishment of sister chromatid cohesion.</text>
</comment>
<comment type="similarity">
    <text evidence="2">Belongs to the MIP18 family.</text>
</comment>
<protein>
    <recommendedName>
        <fullName>MIP18 family protein FAM96A</fullName>
    </recommendedName>
</protein>
<name>FA96A_DICDI</name>
<reference key="1">
    <citation type="journal article" date="2001" name="Nucleic Acids Res.">
        <title>The Dictyostelium discoideum family of Rho-related proteins.</title>
        <authorList>
            <person name="Rivero F."/>
            <person name="Dislich H."/>
            <person name="Gloeckner G."/>
            <person name="Noegel A.A."/>
        </authorList>
    </citation>
    <scope>NUCLEOTIDE SEQUENCE [GENOMIC DNA]</scope>
    <source>
        <strain>AX4</strain>
    </source>
</reference>
<reference key="2">
    <citation type="journal article" date="2005" name="Nature">
        <title>The genome of the social amoeba Dictyostelium discoideum.</title>
        <authorList>
            <person name="Eichinger L."/>
            <person name="Pachebat J.A."/>
            <person name="Gloeckner G."/>
            <person name="Rajandream M.A."/>
            <person name="Sucgang R."/>
            <person name="Berriman M."/>
            <person name="Song J."/>
            <person name="Olsen R."/>
            <person name="Szafranski K."/>
            <person name="Xu Q."/>
            <person name="Tunggal B."/>
            <person name="Kummerfeld S."/>
            <person name="Madera M."/>
            <person name="Konfortov B.A."/>
            <person name="Rivero F."/>
            <person name="Bankier A.T."/>
            <person name="Lehmann R."/>
            <person name="Hamlin N."/>
            <person name="Davies R."/>
            <person name="Gaudet P."/>
            <person name="Fey P."/>
            <person name="Pilcher K."/>
            <person name="Chen G."/>
            <person name="Saunders D."/>
            <person name="Sodergren E.J."/>
            <person name="Davis P."/>
            <person name="Kerhornou A."/>
            <person name="Nie X."/>
            <person name="Hall N."/>
            <person name="Anjard C."/>
            <person name="Hemphill L."/>
            <person name="Bason N."/>
            <person name="Farbrother P."/>
            <person name="Desany B."/>
            <person name="Just E."/>
            <person name="Morio T."/>
            <person name="Rost R."/>
            <person name="Churcher C.M."/>
            <person name="Cooper J."/>
            <person name="Haydock S."/>
            <person name="van Driessche N."/>
            <person name="Cronin A."/>
            <person name="Goodhead I."/>
            <person name="Muzny D.M."/>
            <person name="Mourier T."/>
            <person name="Pain A."/>
            <person name="Lu M."/>
            <person name="Harper D."/>
            <person name="Lindsay R."/>
            <person name="Hauser H."/>
            <person name="James K.D."/>
            <person name="Quiles M."/>
            <person name="Madan Babu M."/>
            <person name="Saito T."/>
            <person name="Buchrieser C."/>
            <person name="Wardroper A."/>
            <person name="Felder M."/>
            <person name="Thangavelu M."/>
            <person name="Johnson D."/>
            <person name="Knights A."/>
            <person name="Loulseged H."/>
            <person name="Mungall K.L."/>
            <person name="Oliver K."/>
            <person name="Price C."/>
            <person name="Quail M.A."/>
            <person name="Urushihara H."/>
            <person name="Hernandez J."/>
            <person name="Rabbinowitsch E."/>
            <person name="Steffen D."/>
            <person name="Sanders M."/>
            <person name="Ma J."/>
            <person name="Kohara Y."/>
            <person name="Sharp S."/>
            <person name="Simmonds M.N."/>
            <person name="Spiegler S."/>
            <person name="Tivey A."/>
            <person name="Sugano S."/>
            <person name="White B."/>
            <person name="Walker D."/>
            <person name="Woodward J.R."/>
            <person name="Winckler T."/>
            <person name="Tanaka Y."/>
            <person name="Shaulsky G."/>
            <person name="Schleicher M."/>
            <person name="Weinstock G.M."/>
            <person name="Rosenthal A."/>
            <person name="Cox E.C."/>
            <person name="Chisholm R.L."/>
            <person name="Gibbs R.A."/>
            <person name="Loomis W.F."/>
            <person name="Platzer M."/>
            <person name="Kay R.R."/>
            <person name="Williams J.G."/>
            <person name="Dear P.H."/>
            <person name="Noegel A.A."/>
            <person name="Barrell B.G."/>
            <person name="Kuspa A."/>
        </authorList>
    </citation>
    <scope>NUCLEOTIDE SEQUENCE [LARGE SCALE GENOMIC DNA]</scope>
    <source>
        <strain>AX4</strain>
    </source>
</reference>
<feature type="chain" id="PRO_0000327625" description="MIP18 family protein FAM96A">
    <location>
        <begin position="1"/>
        <end position="150"/>
    </location>
</feature>
<evidence type="ECO:0000250" key="1"/>
<evidence type="ECO:0000305" key="2"/>
<keyword id="KW-0159">Chromosome partition</keyword>
<keyword id="KW-1185">Reference proteome</keyword>